<dbReference type="EMBL" id="D89547">
    <property type="protein sequence ID" value="BAA13973.1"/>
    <property type="molecule type" value="mRNA"/>
</dbReference>
<dbReference type="PIR" id="T29088">
    <property type="entry name" value="T29088"/>
</dbReference>
<dbReference type="RefSeq" id="NP_001004408.1">
    <property type="nucleotide sequence ID" value="NM_001004408.2"/>
</dbReference>
<dbReference type="SMR" id="P87498"/>
<dbReference type="STRING" id="9031.ENSGALP00000044130"/>
<dbReference type="Allergome" id="8172">
    <property type="allergen name" value="Gal d 6"/>
</dbReference>
<dbReference type="Allergome" id="8173">
    <property type="allergen name" value="Gal d 6.0101"/>
</dbReference>
<dbReference type="GlyCosmos" id="P87498">
    <property type="glycosylation" value="7 sites, No reported glycans"/>
</dbReference>
<dbReference type="GlyGen" id="P87498">
    <property type="glycosylation" value="9 sites"/>
</dbReference>
<dbReference type="PaxDb" id="9031-ENSGALP00000032611"/>
<dbReference type="GeneID" id="424547"/>
<dbReference type="KEGG" id="gga:424547"/>
<dbReference type="CTD" id="559475"/>
<dbReference type="VEuPathDB" id="HostDB:geneid_424547"/>
<dbReference type="eggNOG" id="KOG4338">
    <property type="taxonomic scope" value="Eukaryota"/>
</dbReference>
<dbReference type="InParanoid" id="P87498"/>
<dbReference type="OrthoDB" id="5956066at2759"/>
<dbReference type="PhylomeDB" id="P87498"/>
<dbReference type="PRO" id="PR:P87498"/>
<dbReference type="Proteomes" id="UP000000539">
    <property type="component" value="Unassembled WGS sequence"/>
</dbReference>
<dbReference type="GO" id="GO:0005319">
    <property type="term" value="F:lipid transporter activity"/>
    <property type="evidence" value="ECO:0000318"/>
    <property type="project" value="GO_Central"/>
</dbReference>
<dbReference type="GO" id="GO:0045735">
    <property type="term" value="F:nutrient reservoir activity"/>
    <property type="evidence" value="ECO:0007669"/>
    <property type="project" value="UniProtKB-KW"/>
</dbReference>
<dbReference type="GO" id="GO:0071391">
    <property type="term" value="P:cellular response to estrogen stimulus"/>
    <property type="evidence" value="ECO:0000318"/>
    <property type="project" value="GO_Central"/>
</dbReference>
<dbReference type="GO" id="GO:0032355">
    <property type="term" value="P:response to estradiol"/>
    <property type="evidence" value="ECO:0000318"/>
    <property type="project" value="GO_Central"/>
</dbReference>
<dbReference type="FunFam" id="2.20.50.20:FF:000005">
    <property type="entry name" value="Vitellogenin 3"/>
    <property type="match status" value="1"/>
</dbReference>
<dbReference type="FunFam" id="1.25.10.20:FF:000002">
    <property type="entry name" value="Vitellogenin 7"/>
    <property type="match status" value="1"/>
</dbReference>
<dbReference type="FunFam" id="2.30.230.10:FF:000002">
    <property type="entry name" value="Vitellogenin 7"/>
    <property type="match status" value="1"/>
</dbReference>
<dbReference type="Gene3D" id="2.30.230.10">
    <property type="entry name" value="Lipovitellin, beta-sheet shell regions, chain A"/>
    <property type="match status" value="1"/>
</dbReference>
<dbReference type="Gene3D" id="2.20.80.10">
    <property type="entry name" value="Lipovitellin-phosvitin complex, chain A, domain 4"/>
    <property type="match status" value="1"/>
</dbReference>
<dbReference type="Gene3D" id="2.20.50.20">
    <property type="entry name" value="Lipovitellin. Chain A, domain 3"/>
    <property type="match status" value="2"/>
</dbReference>
<dbReference type="Gene3D" id="2.20.90.10">
    <property type="entry name" value="Vitellinogen, beta-sheet shell domain"/>
    <property type="match status" value="1"/>
</dbReference>
<dbReference type="Gene3D" id="1.25.10.20">
    <property type="entry name" value="Vitellinogen, superhelical"/>
    <property type="match status" value="1"/>
</dbReference>
<dbReference type="InterPro" id="IPR015819">
    <property type="entry name" value="Lipid_transp_b-sht_shell"/>
</dbReference>
<dbReference type="InterPro" id="IPR011030">
    <property type="entry name" value="Lipovitellin_superhlx_dom"/>
</dbReference>
<dbReference type="InterPro" id="IPR015816">
    <property type="entry name" value="Vitellinogen_b-sht_N"/>
</dbReference>
<dbReference type="InterPro" id="IPR015258">
    <property type="entry name" value="Vitellinogen_b-sht_shell"/>
</dbReference>
<dbReference type="InterPro" id="IPR037088">
    <property type="entry name" value="Vitellinogen_b-sht_shell_sf"/>
</dbReference>
<dbReference type="InterPro" id="IPR015255">
    <property type="entry name" value="Vitellinogen_open_b-sht"/>
</dbReference>
<dbReference type="InterPro" id="IPR015817">
    <property type="entry name" value="Vitellinogen_open_b-sht_sub1"/>
</dbReference>
<dbReference type="InterPro" id="IPR050733">
    <property type="entry name" value="Vitellogenin/Apolipophorin"/>
</dbReference>
<dbReference type="InterPro" id="IPR001747">
    <property type="entry name" value="Vitellogenin_N"/>
</dbReference>
<dbReference type="InterPro" id="IPR001846">
    <property type="entry name" value="VWF_type-D"/>
</dbReference>
<dbReference type="PANTHER" id="PTHR23345:SF15">
    <property type="entry name" value="VITELLOGENIN 1-RELATED"/>
    <property type="match status" value="1"/>
</dbReference>
<dbReference type="PANTHER" id="PTHR23345">
    <property type="entry name" value="VITELLOGENIN-RELATED"/>
    <property type="match status" value="1"/>
</dbReference>
<dbReference type="Pfam" id="PF09175">
    <property type="entry name" value="Vit_b-sht_shell"/>
    <property type="match status" value="1"/>
</dbReference>
<dbReference type="Pfam" id="PF09172">
    <property type="entry name" value="Vit_open_b-sht"/>
    <property type="match status" value="1"/>
</dbReference>
<dbReference type="Pfam" id="PF01347">
    <property type="entry name" value="Vitellogenin_N"/>
    <property type="match status" value="1"/>
</dbReference>
<dbReference type="Pfam" id="PF00094">
    <property type="entry name" value="VWD"/>
    <property type="match status" value="1"/>
</dbReference>
<dbReference type="SMART" id="SM01169">
    <property type="entry name" value="DUF1943"/>
    <property type="match status" value="1"/>
</dbReference>
<dbReference type="SMART" id="SM01170">
    <property type="entry name" value="DUF1944"/>
    <property type="match status" value="1"/>
</dbReference>
<dbReference type="SMART" id="SM00638">
    <property type="entry name" value="LPD_N"/>
    <property type="match status" value="1"/>
</dbReference>
<dbReference type="SMART" id="SM00216">
    <property type="entry name" value="VWD"/>
    <property type="match status" value="1"/>
</dbReference>
<dbReference type="SUPFAM" id="SSF56968">
    <property type="entry name" value="Lipovitellin-phosvitin complex, beta-sheet shell regions"/>
    <property type="match status" value="3"/>
</dbReference>
<dbReference type="SUPFAM" id="SSF48431">
    <property type="entry name" value="Lipovitellin-phosvitin complex, superhelical domain"/>
    <property type="match status" value="1"/>
</dbReference>
<dbReference type="PROSITE" id="PS51211">
    <property type="entry name" value="VITELLOGENIN"/>
    <property type="match status" value="1"/>
</dbReference>
<dbReference type="PROSITE" id="PS51233">
    <property type="entry name" value="VWFD"/>
    <property type="match status" value="1"/>
</dbReference>
<evidence type="ECO:0000250" key="1"/>
<evidence type="ECO:0000255" key="2"/>
<evidence type="ECO:0000255" key="3">
    <source>
        <dbReference type="PROSITE-ProRule" id="PRU00557"/>
    </source>
</evidence>
<evidence type="ECO:0000255" key="4">
    <source>
        <dbReference type="PROSITE-ProRule" id="PRU00580"/>
    </source>
</evidence>
<evidence type="ECO:0000256" key="5">
    <source>
        <dbReference type="SAM" id="MobiDB-lite"/>
    </source>
</evidence>
<evidence type="ECO:0000269" key="6">
    <source>
    </source>
</evidence>
<evidence type="ECO:0000269" key="7">
    <source>
    </source>
</evidence>
<evidence type="ECO:0000303" key="8">
    <source>
    </source>
</evidence>
<keyword id="KW-0020">Allergen</keyword>
<keyword id="KW-0903">Direct protein sequencing</keyword>
<keyword id="KW-1015">Disulfide bond</keyword>
<keyword id="KW-0325">Glycoprotein</keyword>
<keyword id="KW-0597">Phosphoprotein</keyword>
<keyword id="KW-1185">Reference proteome</keyword>
<keyword id="KW-0732">Signal</keyword>
<keyword id="KW-0758">Storage protein</keyword>
<sequence length="1912" mass="210630">MRGLISALVLTLVGSQHLNYQPDFGENKVYTYNYESILFSGIPEKGLARTGIRIRSEVEISGIGPKLCLIRIHSIEAAEYNGIWPTSSFSRSLKLTQALTGQLSIPIKFEYSNGHVGNLMAPDSVSDDGLNIYRGILNILELSLKKMQHSYSIQEAGIGGICNTTYAIQENKKANLVDVTKSKDLNSCEEKVQVVTGSAYTQPCQTCQQRNKNSRATATYNYKIKYTHNEAVITQAEVEEVHQFTPFHEITGGNAIVEARQKLALIEVQKQVAEVPPKEFQKRGSLQYQFGSELLQLPVHLFKIKDVERQIEERLQDLVETTYEQLPSDAPAKALKLMHLLRAANEENYESVWKQFSSRPAYRRYLLDLLPAAASHRSLRFLRHKMERQELTNWEIAQTVLVALHSSSPTQEVMEEATLIVKKHCPRSSSVLRKVCLLSYASLCHKRCSSPYSCSECLQVFHVFAGEALGKSNIEEVLLALKALGNVGHPASIKHIKKFLPGYAAGASELPLKVHETAVMALKSIGMRDPQMVQAITLEIFLNHKIHPRIRMLAAVVLLETKPGLPILMILVDAVLKEPSMQVASFIYSHLRALGRSTAPDLQMMASACRMAVRALSPKFDRSGYQFSKVFRFSMFKEFLMSGLAAKYFVLNNAGSLIPTMAVSQLRTHFLGRVADPIEVGIAAEGLQEMFVRGYSPDKDWETNYDFREILKKLSDWKALPRDKPFASGYLKMFGQELLFGRLDKDTLQNVLQVWYGPDEKIPSIRRLISSLQTGIGRQWTKALLLSEIRCIVPTCVGFPMETSFYYSSVTKVAGNVQAQITPSPRSDFRLTELLNSNVRLRSKMSLSMAKHMTFVIGINTNMIQAGLEAHTKVNAHVPVNVVATIQMKEKSIKAEIPPCKEETNLIIVSSKTFAVTRNIEDLAASKMTPVLLPEAVPDIMKMSFDSDSASGETDNIRDRQSVEDVSSGNSFSFGHPSSGKEPFIQSMCSNASTFGVQVCIEKKSVHAAFIRNVPLYNAIGEHALRMSFKPVYSDVPIEKIQVTIQAGDQAPTKMVRLVTFEDPERQESSRKEVMKRVKKILDDTDNQATRNSRSSSSSASSISESSESTTSTPSSSDSDNRASQGDPQINLKSRQSKANEKKFYPFGDSSSSGSSSSSSSSSSSSSDSSSSSRSSSSSDSSSSSSSSSSSSSSKSKSSSRSSKSNRSSSSSNSKDSSSSSSKSNSKGSSSSSSKASGTRQKAKKQSKTTSFPHASAAEGERSVHEQKQETQSSSSSSSRASSNSRSTSSSTSSSSESSGVSHRQWKQDREAETKRVKSQFNSHSSYDIPNEWETYLPKVYRLRFRSAHTHWHSGHRTSSSSSSSSSESGSSHSNSSSSDSSSRRSHMSDSSSSSSSHRHGEKAAHSSRRSPTSRAASAHHRPGSSLTRERNFLGDVIPPGITIVAQAVRSDNRNQGYQATAYVRSDAAKVDVQLVVVQLAETNWKACADAVILPLKAQARMRWGKECRDYRIAALATTGQMARKLAVQLKVQWGIIPSWIKKTSTALMRYVPGVALVLGFSEAHQRNPSRELIVRAVATSPRSIDTVIKVPGVTLYYQGLRVPFTLALGASSSSYETRDITAWNFLPEIASQIAQEDQSTCEVSKGDFKTFDRMSFTCSFNKSCNVVVAQDCTEHPKFIITTRKVDHQSLSREVHINTSSANITICPAADSSLLVTCNKESVLSDSGVSEYEKDNIKIYKNGKTVIVEAPIHGLKNVNFDGEILKVTVASWMRGKTCGVCGNNDREKHNELLMPNHKLAHSCSAFVHSWVLLEETCSGGCKLQRRYVKLNRNPTIDGEESTCYSVDPVLKCMKDCTPIEKTSVKVGFHCFPKATAVSLLEWQRSSDKKSASEDVVESVDADIDCTCTGDCS</sequence>
<name>VIT1_CHICK</name>
<comment type="function">
    <text>Precursor of the egg-yolk proteins that are sources of nutrients during early development of oviparous organisms.</text>
</comment>
<comment type="function">
    <text>Phosvitin is believed to be of importance in sequestering calcium, iron and other cations for the developing embryo.</text>
</comment>
<comment type="tissue specificity">
    <text>Produced by the liver, secreted into the blood and then sequestered by receptor mediated endocytosis into growing oocytes, where it is generally cleaved, giving rise to the respective yolk components.</text>
</comment>
<comment type="induction">
    <text>By steroids (estrogen).</text>
</comment>
<comment type="PTM">
    <text>Phosvitin, an egg yolk storage protein, is one of the most highly phosphorylated (10%) proteins in nature.</text>
</comment>
<comment type="PTM">
    <text>Cathepsin D is responsible for intraoocytic processing of vitellogenin.</text>
</comment>
<comment type="PTM">
    <text>May contain intrachain disulfide bonds.</text>
</comment>
<comment type="allergen">
    <molecule>YGP42</molecule>
    <text evidence="6 7">Causes an allergic reaction in human (PubMed:26897338). Binds to IgE (PubMed:20509661, PubMed:26897338).</text>
</comment>
<reference key="1">
    <citation type="submission" date="1996-12" db="EMBL/GenBank/DDBJ databases">
        <authorList>
            <person name="Mabuchi N."/>
            <person name="Yamamura J."/>
            <person name="Adachi T."/>
            <person name="Aoki N."/>
            <person name="Nakamura R."/>
            <person name="Matsuda T."/>
        </authorList>
    </citation>
    <scope>NUCLEOTIDE SEQUENCE [MRNA]</scope>
    <source>
        <tissue>Liver</tissue>
    </source>
</reference>
<reference key="2">
    <citation type="journal article" date="1995" name="Biochim. Biophys. Acta">
        <title>Precursor-product relationship between chicken vitellogenin and the yolk proteins: the 40 kDa yolk plasma glycoprotein is derived from the C-terminal cysteine-rich domain of vitellogenin II.</title>
        <authorList>
            <person name="Yamamura J."/>
            <person name="Adachi T."/>
            <person name="Aoki N."/>
            <person name="Nakajima H."/>
            <person name="Nakamura R."/>
            <person name="Matsuda T."/>
        </authorList>
    </citation>
    <scope>PROTEIN SEQUENCE OF 1628-1639</scope>
    <scope>IDENTIFICATION OF YGP42</scope>
</reference>
<reference key="3">
    <citation type="journal article" date="2010" name="J. Agric. Food Chem.">
        <title>Gal d 6 is the second allergen characterized from egg yolk.</title>
        <authorList>
            <person name="Amo A."/>
            <person name="Rodriguez-Perez R."/>
            <person name="Blanco J."/>
            <person name="Villota J."/>
            <person name="Juste S."/>
            <person name="Moneo I."/>
            <person name="Caballero M.L."/>
        </authorList>
    </citation>
    <scope>IGE-BINDING</scope>
</reference>
<reference key="4">
    <citation type="journal article" date="2016" name="Mol. Immunol.">
        <title>Molecular and immunological analysis of hen's egg yolk allergens with a focus on YGP42 (Gal d 6).</title>
        <authorList>
            <person name="De Silva C."/>
            <person name="Dhanapala P."/>
            <person name="Doran T."/>
            <person name="Tang M.L.K."/>
            <person name="Suphioglu C."/>
        </authorList>
    </citation>
    <scope>ALLERGEN</scope>
</reference>
<feature type="signal peptide" evidence="2">
    <location>
        <begin position="1"/>
        <end position="15"/>
    </location>
</feature>
<feature type="chain" id="PRO_0000041552" description="Vitellogenin-1">
    <location>
        <begin position="16"/>
        <end position="1912"/>
    </location>
</feature>
<feature type="chain" id="PRO_0000041553" description="Lipovitellin-1" evidence="1">
    <location>
        <begin position="16"/>
        <end position="1139"/>
    </location>
</feature>
<feature type="chain" id="PRO_0000041554" description="Phosvitin" evidence="1">
    <location>
        <begin position="1140"/>
        <end position="1391"/>
    </location>
</feature>
<feature type="chain" id="PRO_0000041555" description="Lipovitellin-2" evidence="1">
    <location>
        <begin position="1392"/>
        <end position="1627"/>
    </location>
</feature>
<feature type="chain" id="PRO_0000041556" description="YGP42">
    <location>
        <begin position="1628"/>
        <end position="1912"/>
    </location>
</feature>
<feature type="domain" description="Vitellogenin" evidence="3">
    <location>
        <begin position="24"/>
        <end position="663"/>
    </location>
</feature>
<feature type="domain" description="VWFD" evidence="4">
    <location>
        <begin position="1640"/>
        <end position="1818"/>
    </location>
</feature>
<feature type="region of interest" description="Disordered" evidence="5">
    <location>
        <begin position="948"/>
        <end position="972"/>
    </location>
</feature>
<feature type="region of interest" description="Disordered" evidence="5">
    <location>
        <begin position="1080"/>
        <end position="1329"/>
    </location>
</feature>
<feature type="region of interest" description="Disordered" evidence="5">
    <location>
        <begin position="1351"/>
        <end position="1432"/>
    </location>
</feature>
<feature type="compositionally biased region" description="Low complexity" evidence="5">
    <location>
        <begin position="1092"/>
        <end position="1124"/>
    </location>
</feature>
<feature type="compositionally biased region" description="Low complexity" evidence="5">
    <location>
        <begin position="1150"/>
        <end position="1235"/>
    </location>
</feature>
<feature type="compositionally biased region" description="Basic and acidic residues" evidence="5">
    <location>
        <begin position="1259"/>
        <end position="1269"/>
    </location>
</feature>
<feature type="compositionally biased region" description="Low complexity" evidence="5">
    <location>
        <begin position="1273"/>
        <end position="1299"/>
    </location>
</feature>
<feature type="compositionally biased region" description="Basic and acidic residues" evidence="5">
    <location>
        <begin position="1306"/>
        <end position="1316"/>
    </location>
</feature>
<feature type="compositionally biased region" description="Polar residues" evidence="5">
    <location>
        <begin position="1319"/>
        <end position="1328"/>
    </location>
</feature>
<feature type="compositionally biased region" description="Low complexity" evidence="5">
    <location>
        <begin position="1357"/>
        <end position="1381"/>
    </location>
</feature>
<feature type="compositionally biased region" description="Basic residues" evidence="5">
    <location>
        <begin position="1397"/>
        <end position="1409"/>
    </location>
</feature>
<feature type="glycosylation site" description="N-linked (GlcNAc...) asparagine" evidence="2">
    <location>
        <position position="163"/>
    </location>
</feature>
<feature type="glycosylation site" description="N-linked (GlcNAc...) asparagine" evidence="2">
    <location>
        <position position="991"/>
    </location>
</feature>
<feature type="glycosylation site" description="N-linked (GlcNAc...) asparagine" evidence="2">
    <location>
        <position position="1206"/>
    </location>
</feature>
<feature type="glycosylation site" description="N-linked (GlcNAc...) asparagine" evidence="2">
    <location>
        <position position="1375"/>
    </location>
</feature>
<feature type="glycosylation site" description="N-linked (GlcNAc...) asparagine" evidence="2">
    <location>
        <position position="1662"/>
    </location>
</feature>
<feature type="glycosylation site" description="N-linked (GlcNAc...) asparagine" evidence="2">
    <location>
        <position position="1698"/>
    </location>
</feature>
<feature type="glycosylation site" description="N-linked (GlcNAc...) asparagine" evidence="2">
    <location>
        <position position="1703"/>
    </location>
</feature>
<feature type="disulfide bond" evidence="4">
    <location>
        <begin position="1642"/>
        <end position="1781"/>
    </location>
</feature>
<feature type="disulfide bond" evidence="4">
    <location>
        <begin position="1665"/>
        <end position="1817"/>
    </location>
</feature>
<protein>
    <recommendedName>
        <fullName>Vitellogenin-1</fullName>
    </recommendedName>
    <alternativeName>
        <fullName>Minor vitellogenin</fullName>
    </alternativeName>
    <alternativeName>
        <fullName>Vitellogenin I</fullName>
    </alternativeName>
    <component>
        <recommendedName>
            <fullName>Lipovitellin-1</fullName>
        </recommendedName>
        <alternativeName>
            <fullName>Lipovitellin I</fullName>
            <shortName>LVI</shortName>
        </alternativeName>
    </component>
    <component>
        <recommendedName>
            <fullName>Phosvitin</fullName>
            <shortName>PV</shortName>
        </recommendedName>
    </component>
    <component>
        <recommendedName>
            <fullName>Lipovitellin-2</fullName>
        </recommendedName>
        <alternativeName>
            <fullName>Lipovitellin II</fullName>
            <shortName>LVII</shortName>
        </alternativeName>
    </component>
    <component>
        <recommendedName>
            <fullName evidence="8">YGP42</fullName>
        </recommendedName>
        <allergenName evidence="8">Gal d 6</allergenName>
    </component>
</protein>
<gene>
    <name type="primary">VTG1</name>
    <name type="synonym">VTGI</name>
</gene>
<organism>
    <name type="scientific">Gallus gallus</name>
    <name type="common">Chicken</name>
    <dbReference type="NCBI Taxonomy" id="9031"/>
    <lineage>
        <taxon>Eukaryota</taxon>
        <taxon>Metazoa</taxon>
        <taxon>Chordata</taxon>
        <taxon>Craniata</taxon>
        <taxon>Vertebrata</taxon>
        <taxon>Euteleostomi</taxon>
        <taxon>Archelosauria</taxon>
        <taxon>Archosauria</taxon>
        <taxon>Dinosauria</taxon>
        <taxon>Saurischia</taxon>
        <taxon>Theropoda</taxon>
        <taxon>Coelurosauria</taxon>
        <taxon>Aves</taxon>
        <taxon>Neognathae</taxon>
        <taxon>Galloanserae</taxon>
        <taxon>Galliformes</taxon>
        <taxon>Phasianidae</taxon>
        <taxon>Phasianinae</taxon>
        <taxon>Gallus</taxon>
    </lineage>
</organism>
<accession>P87498</accession>
<proteinExistence type="evidence at protein level"/>